<reference key="1">
    <citation type="journal article" date="2005" name="Nucleic Acids Res.">
        <title>Genomic blueprint of Hahella chejuensis, a marine microbe producing an algicidal agent.</title>
        <authorList>
            <person name="Jeong H."/>
            <person name="Yim J.H."/>
            <person name="Lee C."/>
            <person name="Choi S.-H."/>
            <person name="Park Y.K."/>
            <person name="Yoon S.H."/>
            <person name="Hur C.-G."/>
            <person name="Kang H.-Y."/>
            <person name="Kim D."/>
            <person name="Lee H.H."/>
            <person name="Park K.H."/>
            <person name="Park S.-H."/>
            <person name="Park H.-S."/>
            <person name="Lee H.K."/>
            <person name="Oh T.K."/>
            <person name="Kim J.F."/>
        </authorList>
    </citation>
    <scope>NUCLEOTIDE SEQUENCE [LARGE SCALE GENOMIC DNA]</scope>
    <source>
        <strain>KCTC 2396</strain>
    </source>
</reference>
<comment type="function">
    <text evidence="1">One of the primary rRNA binding proteins, it binds directly to 16S rRNA where it helps nucleate assembly of the platform of the 30S subunit by binding and bridging several RNA helices of the 16S rRNA.</text>
</comment>
<comment type="function">
    <text evidence="1">Forms an intersubunit bridge (bridge B4) with the 23S rRNA of the 50S subunit in the ribosome.</text>
</comment>
<comment type="subunit">
    <text evidence="1">Part of the 30S ribosomal subunit. Forms a bridge to the 50S subunit in the 70S ribosome, contacting the 23S rRNA.</text>
</comment>
<comment type="similarity">
    <text evidence="1">Belongs to the universal ribosomal protein uS15 family.</text>
</comment>
<name>RS15_HAHCH</name>
<gene>
    <name evidence="1" type="primary">rpsO</name>
    <name type="ordered locus">HCH_01243</name>
</gene>
<dbReference type="EMBL" id="CP000155">
    <property type="protein sequence ID" value="ABC28114.1"/>
    <property type="molecule type" value="Genomic_DNA"/>
</dbReference>
<dbReference type="RefSeq" id="WP_011395187.1">
    <property type="nucleotide sequence ID" value="NC_007645.1"/>
</dbReference>
<dbReference type="SMR" id="Q2SML0"/>
<dbReference type="STRING" id="349521.HCH_01243"/>
<dbReference type="KEGG" id="hch:HCH_01243"/>
<dbReference type="eggNOG" id="COG0184">
    <property type="taxonomic scope" value="Bacteria"/>
</dbReference>
<dbReference type="HOGENOM" id="CLU_148518_0_0_6"/>
<dbReference type="OrthoDB" id="9799262at2"/>
<dbReference type="Proteomes" id="UP000000238">
    <property type="component" value="Chromosome"/>
</dbReference>
<dbReference type="GO" id="GO:0022627">
    <property type="term" value="C:cytosolic small ribosomal subunit"/>
    <property type="evidence" value="ECO:0007669"/>
    <property type="project" value="TreeGrafter"/>
</dbReference>
<dbReference type="GO" id="GO:0019843">
    <property type="term" value="F:rRNA binding"/>
    <property type="evidence" value="ECO:0007669"/>
    <property type="project" value="UniProtKB-UniRule"/>
</dbReference>
<dbReference type="GO" id="GO:0003735">
    <property type="term" value="F:structural constituent of ribosome"/>
    <property type="evidence" value="ECO:0007669"/>
    <property type="project" value="InterPro"/>
</dbReference>
<dbReference type="GO" id="GO:0006412">
    <property type="term" value="P:translation"/>
    <property type="evidence" value="ECO:0007669"/>
    <property type="project" value="UniProtKB-UniRule"/>
</dbReference>
<dbReference type="CDD" id="cd00353">
    <property type="entry name" value="Ribosomal_S15p_S13e"/>
    <property type="match status" value="1"/>
</dbReference>
<dbReference type="FunFam" id="1.10.287.10:FF:000002">
    <property type="entry name" value="30S ribosomal protein S15"/>
    <property type="match status" value="1"/>
</dbReference>
<dbReference type="Gene3D" id="6.10.250.3130">
    <property type="match status" value="1"/>
</dbReference>
<dbReference type="Gene3D" id="1.10.287.10">
    <property type="entry name" value="S15/NS1, RNA-binding"/>
    <property type="match status" value="1"/>
</dbReference>
<dbReference type="HAMAP" id="MF_01343_B">
    <property type="entry name" value="Ribosomal_uS15_B"/>
    <property type="match status" value="1"/>
</dbReference>
<dbReference type="InterPro" id="IPR000589">
    <property type="entry name" value="Ribosomal_uS15"/>
</dbReference>
<dbReference type="InterPro" id="IPR005290">
    <property type="entry name" value="Ribosomal_uS15_bac-type"/>
</dbReference>
<dbReference type="InterPro" id="IPR009068">
    <property type="entry name" value="uS15_NS1_RNA-bd_sf"/>
</dbReference>
<dbReference type="NCBIfam" id="TIGR00952">
    <property type="entry name" value="S15_bact"/>
    <property type="match status" value="1"/>
</dbReference>
<dbReference type="PANTHER" id="PTHR23321">
    <property type="entry name" value="RIBOSOMAL PROTEIN S15, BACTERIAL AND ORGANELLAR"/>
    <property type="match status" value="1"/>
</dbReference>
<dbReference type="PANTHER" id="PTHR23321:SF26">
    <property type="entry name" value="SMALL RIBOSOMAL SUBUNIT PROTEIN US15M"/>
    <property type="match status" value="1"/>
</dbReference>
<dbReference type="Pfam" id="PF00312">
    <property type="entry name" value="Ribosomal_S15"/>
    <property type="match status" value="1"/>
</dbReference>
<dbReference type="SMART" id="SM01387">
    <property type="entry name" value="Ribosomal_S15"/>
    <property type="match status" value="1"/>
</dbReference>
<dbReference type="SUPFAM" id="SSF47060">
    <property type="entry name" value="S15/NS1 RNA-binding domain"/>
    <property type="match status" value="1"/>
</dbReference>
<dbReference type="PROSITE" id="PS00362">
    <property type="entry name" value="RIBOSOMAL_S15"/>
    <property type="match status" value="1"/>
</dbReference>
<evidence type="ECO:0000255" key="1">
    <source>
        <dbReference type="HAMAP-Rule" id="MF_01343"/>
    </source>
</evidence>
<evidence type="ECO:0000305" key="2"/>
<sequence>MALSATEKSVIVKEYQVKEGDTGSPEVQVALLTANINKLQDHFQANKHDHHSRRGLIRMVNQRRKLLDYLKGKDTQRYVDLIQKLGLRR</sequence>
<accession>Q2SML0</accession>
<organism>
    <name type="scientific">Hahella chejuensis (strain KCTC 2396)</name>
    <dbReference type="NCBI Taxonomy" id="349521"/>
    <lineage>
        <taxon>Bacteria</taxon>
        <taxon>Pseudomonadati</taxon>
        <taxon>Pseudomonadota</taxon>
        <taxon>Gammaproteobacteria</taxon>
        <taxon>Oceanospirillales</taxon>
        <taxon>Hahellaceae</taxon>
        <taxon>Hahella</taxon>
    </lineage>
</organism>
<protein>
    <recommendedName>
        <fullName evidence="1">Small ribosomal subunit protein uS15</fullName>
    </recommendedName>
    <alternativeName>
        <fullName evidence="2">30S ribosomal protein S15</fullName>
    </alternativeName>
</protein>
<keyword id="KW-1185">Reference proteome</keyword>
<keyword id="KW-0687">Ribonucleoprotein</keyword>
<keyword id="KW-0689">Ribosomal protein</keyword>
<keyword id="KW-0694">RNA-binding</keyword>
<keyword id="KW-0699">rRNA-binding</keyword>
<feature type="chain" id="PRO_0000255498" description="Small ribosomal subunit protein uS15">
    <location>
        <begin position="1"/>
        <end position="89"/>
    </location>
</feature>
<proteinExistence type="inferred from homology"/>